<evidence type="ECO:0000255" key="1">
    <source>
        <dbReference type="HAMAP-Rule" id="MF_03071"/>
    </source>
</evidence>
<evidence type="ECO:0000256" key="2">
    <source>
        <dbReference type="SAM" id="MobiDB-lite"/>
    </source>
</evidence>
<evidence type="ECO:0000305" key="3"/>
<reference key="1">
    <citation type="submission" date="2008-08" db="EMBL/GenBank/DDBJ databases">
        <authorList>
            <consortium name="NIH - Xenopus Gene Collection (XGC) project"/>
        </authorList>
    </citation>
    <scope>NUCLEOTIDE SEQUENCE [LARGE SCALE MRNA]</scope>
    <source>
        <tissue>Brain</tissue>
    </source>
</reference>
<proteinExistence type="evidence at transcript level"/>
<accession>B5DE69</accession>
<comment type="function">
    <text evidence="1">ATP-dependent chromatin-remodeling factor, it slides nucleosomes along DNA; nucleosome sliding requires ATP. Acts as a transcription repressor by remodeling chromatin structure and recruiting histone H1 to target genes. Suppresses p53/tp53-mediated apoptosis by recruiting histone H1 and preventing p53/tp53 transactivation activity. Acts as a negative regulator of Wnt signaling pathway by regulating beta-catenin (ctnnb1) activity. Negatively regulates ctnnb1-targeted gene expression by being recruited specifically to the promoter regions of several ctnnb1 responsive genes. May also act as a transcription activator by participating in efficient U6 RNA polymerase III transcription.</text>
</comment>
<comment type="catalytic activity">
    <reaction evidence="1">
        <text>ATP + H2O = ADP + phosphate + H(+)</text>
        <dbReference type="Rhea" id="RHEA:13065"/>
        <dbReference type="ChEBI" id="CHEBI:15377"/>
        <dbReference type="ChEBI" id="CHEBI:15378"/>
        <dbReference type="ChEBI" id="CHEBI:30616"/>
        <dbReference type="ChEBI" id="CHEBI:43474"/>
        <dbReference type="ChEBI" id="CHEBI:456216"/>
    </reaction>
</comment>
<comment type="subunit">
    <text evidence="1">Component of some MLL1/MLL complex.</text>
</comment>
<comment type="subcellular location">
    <subcellularLocation>
        <location evidence="1">Nucleus</location>
    </subcellularLocation>
</comment>
<comment type="similarity">
    <text evidence="1">Belongs to the SNF2/RAD54 helicase family. CHD8 subfamily.</text>
</comment>
<comment type="sequence caution" evidence="3">
    <conflict type="erroneous initiation">
        <sequence resource="EMBL-CDS" id="AAI68549"/>
    </conflict>
</comment>
<keyword id="KW-0010">Activator</keyword>
<keyword id="KW-0067">ATP-binding</keyword>
<keyword id="KW-0156">Chromatin regulator</keyword>
<keyword id="KW-0238">DNA-binding</keyword>
<keyword id="KW-0378">Hydrolase</keyword>
<keyword id="KW-0547">Nucleotide-binding</keyword>
<keyword id="KW-0539">Nucleus</keyword>
<keyword id="KW-1185">Reference proteome</keyword>
<keyword id="KW-0677">Repeat</keyword>
<keyword id="KW-0678">Repressor</keyword>
<keyword id="KW-0804">Transcription</keyword>
<keyword id="KW-0805">Transcription regulation</keyword>
<keyword id="KW-0879">Wnt signaling pathway</keyword>
<gene>
    <name evidence="1" type="primary">chd8</name>
</gene>
<organism>
    <name type="scientific">Xenopus tropicalis</name>
    <name type="common">Western clawed frog</name>
    <name type="synonym">Silurana tropicalis</name>
    <dbReference type="NCBI Taxonomy" id="8364"/>
    <lineage>
        <taxon>Eukaryota</taxon>
        <taxon>Metazoa</taxon>
        <taxon>Chordata</taxon>
        <taxon>Craniata</taxon>
        <taxon>Vertebrata</taxon>
        <taxon>Euteleostomi</taxon>
        <taxon>Amphibia</taxon>
        <taxon>Batrachia</taxon>
        <taxon>Anura</taxon>
        <taxon>Pipoidea</taxon>
        <taxon>Pipidae</taxon>
        <taxon>Xenopodinae</taxon>
        <taxon>Xenopus</taxon>
        <taxon>Silurana</taxon>
    </lineage>
</organism>
<sequence>MADPIMDLFDDPNLFGLDSLTGDSFGRDGPDTIDDALGLGNVLGPLEPITDRVGLPGADVGNNEVKQQTESQVLPDNPALMSATEIMQPIQLPTNQETLNQGNPFMGASNAGAPKIMILKAPAGMTVGACPVTQIQTLTPHQAANGGKVAFAKVLTGTPLRPGVSIVSGNTVLAKMPSTGVAGQVGAVRPVRQLLLQPVRASAAPGSSESNTGIKPAITLTSAPQQGDPKRITLVLQQPSQVGATAQQGQRHVVLGGLPGKIVLQGNQLAALTQAKTPQGQPAKVVTIQLQVQQQPGAAGQTPQKFQIVQQAPGGVAIAPSGQHTHMLNQQGVQRLSVPLKVVLQPQAGSSQGTAQGLSVVKVLNASEVANLTASQTVVKTSTGGGESRKLDSQKKQEKANRIVAEAIARARARGEQNIPRVLNEDELPSVNPEDDDGSRRKRKKKKGETSDRSKDEKPKKVKGSGSLRSRSKGKPSTITPIVGKKRKRNPSSDNSDAEIMASQASPAEDEDSVQKRRSNRQVKRKKYTEDLDIKITDDEDDEEVDVTGPVKTEPVLLPEPMPLPDSEAVPSMQFFVENPSEEDAAIVDKILSMRLAKKELPTGEYVEVEEYFVKYKNYSYLHCEWATIEQLERDKRIHQKLKRFKTKMTQMQHFLQEDEESFNPDYVEVDRILDESHSTDKDNGEPVVYYLVKWCSLPYEDSTWELKEDVDDGKIEEFKRIEARQPNLKRVARPAATSWKKLELSREYQNGNQLREYQLEGVNWLLFNWYNRQNCILADEMGLGKTIQSITFLQEVYNVGIRGPFLVIAPLSTITNWEREFGSWTQMNTIVYHGSLASRQMIQQYEMYCKDSKGRLIPGAYKFDALITTFEMVLSDCPELREIEWRCVIIDEAHRLKNRNCKLLDSLKHMDLEHKVLLTGTPLQNTVEELFSLLHFLEPTQFSSEAEFLKDFGDLKTEEQVQKLQAILKPMMLRRLKEDVEKNLAPKQETIIEVELTNIQKKYYRAILEKNFSFLTKGASQSNTPNLLNTMMELRKCCNHPYLITGAEEKIISEFREATPVVPPDFHVQAMVRSSGKLVLIDKLLPKLRAGGHKVLIFSQMVRCLDILEDYLIQRRYLYERIDGRVRGNMRQAAIDRFSRPDSDRFVFLLCTRAGGLGINLTAADTCIIFDSDWNPQNDLQAQARCHRIGQSKAVKIYRLITRNSYEREMFDKASLKLGLDKAVLQSMSGRDNHLSGPIQQFTKKEIEDLLRKGAYAAIMDEDDEGSKFCEEDIDQILLRRTTTITIESEGKGSTFSKASFVASENRTDISLDDPNFWQKWAKKADLDLDLLSSKNTLVIDTPRIRKQTRHFTNKDDDMVEFSDLESDDDDRPKARRQDRKHGYGRTDCFRVEKHLLVYGWGRWRDILTHGRFKRGMNERDVEKICRAILVYCLLHYRGDENIKSFIWDLITPAENGKTKQLQNHSGLSIPVPRGRKGKKVKSQSSFDIHKADWIHKYNPDTLFQDEGYKKHLKHQCNKVLLRVRMLYFLRQEVIGNQAMKVLSGVEARQIDIWFPQVDQVEVPSRWWDREADKSLLIGVFKHGYEKYNTMRADPALCFLEKVGGPDEQAIAAEHHAQDFSELPDGGDFDRDIEDPEYKPLHAQKDPEDEIDSLMMDEEISVVDGEEATAMPSGMLWPPGSALTARLRRLITAYQRSYKREQLKLEAEERGDKRRKRCEAAFKLKEIARREKQQRWTRREACDFFRVLSSFGVEYDPDTQLYDWQRFRGLARLDKKTDESLLKYFHGFVAMCRQVCRLPPAAGDEPPDPSLFIEPISEERASRALFRLDLLRRVREQVLCHPLLIPRLSLCRPDPELPEWWESGRHDNELLQGAARYGLSRTDLTILQDHAFSFLRCQISYFQSRGISGHSRPSTPTTAPSVPTERQPSHLASLSSSVSCSPAPRRSSSCSSSSHSSNSEDSSDESNGVKVKPNAGLSHARLYDEESRLSLTASPADLTTEDSIQTALETPHSTDWPKDRVLICRIEQVCSAVLTGKWSSPRRLSDPPSDSPDSLPPTPEQQSPAHFTQIRPAPDPKEFTIQIKSEEGLKIKFQKHKFMGNGALDSAPHTQKKKSKKKMDLDMDTRIPVVNQKDGTLLLGEEAPLRCQLPEWLHRNPDFMVDPRFIAVSGYWIPYINRGKHFL</sequence>
<name>CHD8_XENTR</name>
<dbReference type="EC" id="3.6.4.-" evidence="1"/>
<dbReference type="EMBL" id="BC168549">
    <property type="protein sequence ID" value="AAI68549.1"/>
    <property type="status" value="ALT_INIT"/>
    <property type="molecule type" value="mRNA"/>
</dbReference>
<dbReference type="RefSeq" id="NP_001131089.2">
    <property type="nucleotide sequence ID" value="NM_001137617.2"/>
</dbReference>
<dbReference type="SMR" id="B5DE69"/>
<dbReference type="FunCoup" id="B5DE69">
    <property type="interactions" value="3472"/>
</dbReference>
<dbReference type="STRING" id="8364.ENSXETP00000031524"/>
<dbReference type="GeneID" id="100192376"/>
<dbReference type="KEGG" id="xtr:100192376"/>
<dbReference type="AGR" id="Xenbase:XB-GENE-966847"/>
<dbReference type="CTD" id="57680"/>
<dbReference type="Xenbase" id="XB-GENE-966847">
    <property type="gene designation" value="chd8"/>
</dbReference>
<dbReference type="eggNOG" id="KOG0384">
    <property type="taxonomic scope" value="Eukaryota"/>
</dbReference>
<dbReference type="InParanoid" id="B5DE69"/>
<dbReference type="OrthoDB" id="5857104at2759"/>
<dbReference type="Reactome" id="R-XTR-3769402">
    <property type="pathway name" value="Deactivation of the beta-catenin transactivating complex"/>
</dbReference>
<dbReference type="Proteomes" id="UP000008143">
    <property type="component" value="Chromosome 1"/>
</dbReference>
<dbReference type="Bgee" id="ENSXETG00000017194">
    <property type="expression patterns" value="Expressed in blastula and 12 other cell types or tissues"/>
</dbReference>
<dbReference type="ExpressionAtlas" id="B5DE69">
    <property type="expression patterns" value="differential"/>
</dbReference>
<dbReference type="GO" id="GO:0071339">
    <property type="term" value="C:MLL1 complex"/>
    <property type="evidence" value="ECO:0000250"/>
    <property type="project" value="UniProtKB"/>
</dbReference>
<dbReference type="GO" id="GO:0005634">
    <property type="term" value="C:nucleus"/>
    <property type="evidence" value="ECO:0000250"/>
    <property type="project" value="UniProtKB"/>
</dbReference>
<dbReference type="GO" id="GO:0005524">
    <property type="term" value="F:ATP binding"/>
    <property type="evidence" value="ECO:0007669"/>
    <property type="project" value="UniProtKB-UniRule"/>
</dbReference>
<dbReference type="GO" id="GO:0016887">
    <property type="term" value="F:ATP hydrolysis activity"/>
    <property type="evidence" value="ECO:0007669"/>
    <property type="project" value="RHEA"/>
</dbReference>
<dbReference type="GO" id="GO:0008013">
    <property type="term" value="F:beta-catenin binding"/>
    <property type="evidence" value="ECO:0007669"/>
    <property type="project" value="UniProtKB-UniRule"/>
</dbReference>
<dbReference type="GO" id="GO:0003677">
    <property type="term" value="F:DNA binding"/>
    <property type="evidence" value="ECO:0007669"/>
    <property type="project" value="UniProtKB-UniRule"/>
</dbReference>
<dbReference type="GO" id="GO:0003678">
    <property type="term" value="F:DNA helicase activity"/>
    <property type="evidence" value="ECO:0007669"/>
    <property type="project" value="UniProtKB-UniRule"/>
</dbReference>
<dbReference type="GO" id="GO:0042393">
    <property type="term" value="F:histone binding"/>
    <property type="evidence" value="ECO:0007669"/>
    <property type="project" value="UniProtKB-UniRule"/>
</dbReference>
<dbReference type="GO" id="GO:0002039">
    <property type="term" value="F:p53 binding"/>
    <property type="evidence" value="ECO:0007669"/>
    <property type="project" value="UniProtKB-UniRule"/>
</dbReference>
<dbReference type="GO" id="GO:0006338">
    <property type="term" value="P:chromatin remodeling"/>
    <property type="evidence" value="ECO:0007669"/>
    <property type="project" value="UniProtKB-UniRule"/>
</dbReference>
<dbReference type="GO" id="GO:0043066">
    <property type="term" value="P:negative regulation of apoptotic process"/>
    <property type="evidence" value="ECO:0007669"/>
    <property type="project" value="UniProtKB-UniRule"/>
</dbReference>
<dbReference type="GO" id="GO:0045892">
    <property type="term" value="P:negative regulation of DNA-templated transcription"/>
    <property type="evidence" value="ECO:0007669"/>
    <property type="project" value="UniProtKB-UniRule"/>
</dbReference>
<dbReference type="GO" id="GO:0030178">
    <property type="term" value="P:negative regulation of Wnt signaling pathway"/>
    <property type="evidence" value="ECO:0007669"/>
    <property type="project" value="UniProtKB-UniRule"/>
</dbReference>
<dbReference type="GO" id="GO:0045893">
    <property type="term" value="P:positive regulation of DNA-templated transcription"/>
    <property type="evidence" value="ECO:0007669"/>
    <property type="project" value="UniProtKB-UniRule"/>
</dbReference>
<dbReference type="GO" id="GO:0016055">
    <property type="term" value="P:Wnt signaling pathway"/>
    <property type="evidence" value="ECO:0007669"/>
    <property type="project" value="UniProtKB-KW"/>
</dbReference>
<dbReference type="CDD" id="cd18668">
    <property type="entry name" value="CD1_tandem_CHD5-9_like"/>
    <property type="match status" value="1"/>
</dbReference>
<dbReference type="CDD" id="cd18663">
    <property type="entry name" value="CD2_tandem_CHD5-9_like"/>
    <property type="match status" value="1"/>
</dbReference>
<dbReference type="CDD" id="cd18060">
    <property type="entry name" value="DEXHc_CHD8"/>
    <property type="match status" value="1"/>
</dbReference>
<dbReference type="CDD" id="cd18793">
    <property type="entry name" value="SF2_C_SNF"/>
    <property type="match status" value="1"/>
</dbReference>
<dbReference type="FunFam" id="2.40.50.40:FF:000001">
    <property type="entry name" value="chromodomain-helicase-DNA-binding protein 8 isoform X4"/>
    <property type="match status" value="1"/>
</dbReference>
<dbReference type="FunFam" id="2.40.50.40:FF:000005">
    <property type="entry name" value="chromodomain-helicase-DNA-binding protein 8 isoform X4"/>
    <property type="match status" value="1"/>
</dbReference>
<dbReference type="FunFam" id="3.40.50.10810:FF:000003">
    <property type="entry name" value="chromodomain-helicase-DNA-binding protein 8 isoform X4"/>
    <property type="match status" value="1"/>
</dbReference>
<dbReference type="FunFam" id="3.40.50.300:FF:000015">
    <property type="entry name" value="chromodomain-helicase-DNA-binding protein 9 isoform X1"/>
    <property type="match status" value="1"/>
</dbReference>
<dbReference type="Gene3D" id="2.40.50.40">
    <property type="match status" value="2"/>
</dbReference>
<dbReference type="Gene3D" id="3.40.5.120">
    <property type="match status" value="1"/>
</dbReference>
<dbReference type="Gene3D" id="1.10.10.60">
    <property type="entry name" value="Homeodomain-like"/>
    <property type="match status" value="1"/>
</dbReference>
<dbReference type="Gene3D" id="3.40.50.300">
    <property type="entry name" value="P-loop containing nucleotide triphosphate hydrolases"/>
    <property type="match status" value="1"/>
</dbReference>
<dbReference type="Gene3D" id="3.40.50.10810">
    <property type="entry name" value="Tandem AAA-ATPase domain"/>
    <property type="match status" value="1"/>
</dbReference>
<dbReference type="HAMAP" id="MF_03071">
    <property type="entry name" value="CHD8"/>
    <property type="match status" value="1"/>
</dbReference>
<dbReference type="InterPro" id="IPR006576">
    <property type="entry name" value="BRK_domain"/>
</dbReference>
<dbReference type="InterPro" id="IPR037259">
    <property type="entry name" value="BRK_sf"/>
</dbReference>
<dbReference type="InterPro" id="IPR051493">
    <property type="entry name" value="CHD"/>
</dbReference>
<dbReference type="InterPro" id="IPR034724">
    <property type="entry name" value="CHD8"/>
</dbReference>
<dbReference type="InterPro" id="IPR016197">
    <property type="entry name" value="Chromo-like_dom_sf"/>
</dbReference>
<dbReference type="InterPro" id="IPR000953">
    <property type="entry name" value="Chromo/chromo_shadow_dom"/>
</dbReference>
<dbReference type="InterPro" id="IPR023780">
    <property type="entry name" value="Chromo_domain"/>
</dbReference>
<dbReference type="InterPro" id="IPR014001">
    <property type="entry name" value="Helicase_ATP-bd"/>
</dbReference>
<dbReference type="InterPro" id="IPR001650">
    <property type="entry name" value="Helicase_C-like"/>
</dbReference>
<dbReference type="InterPro" id="IPR056342">
    <property type="entry name" value="HTH_CHD6-9"/>
</dbReference>
<dbReference type="InterPro" id="IPR027417">
    <property type="entry name" value="P-loop_NTPase"/>
</dbReference>
<dbReference type="InterPro" id="IPR038718">
    <property type="entry name" value="SNF2-like_sf"/>
</dbReference>
<dbReference type="InterPro" id="IPR049730">
    <property type="entry name" value="SNF2/RAD54-like_C"/>
</dbReference>
<dbReference type="InterPro" id="IPR000330">
    <property type="entry name" value="SNF2_N"/>
</dbReference>
<dbReference type="PANTHER" id="PTHR46850">
    <property type="entry name" value="CHROMODOMAIN-HELICASE-DNA-BINDING PROTEIN 9"/>
    <property type="match status" value="1"/>
</dbReference>
<dbReference type="PANTHER" id="PTHR46850:SF1">
    <property type="entry name" value="CHROMODOMAIN-HELICASE-DNA-BINDING PROTEIN 9"/>
    <property type="match status" value="1"/>
</dbReference>
<dbReference type="Pfam" id="PF07533">
    <property type="entry name" value="BRK"/>
    <property type="match status" value="1"/>
</dbReference>
<dbReference type="Pfam" id="PF00385">
    <property type="entry name" value="Chromo"/>
    <property type="match status" value="2"/>
</dbReference>
<dbReference type="Pfam" id="PF00271">
    <property type="entry name" value="Helicase_C"/>
    <property type="match status" value="1"/>
</dbReference>
<dbReference type="Pfam" id="PF23078">
    <property type="entry name" value="HTH_CHD6-9"/>
    <property type="match status" value="1"/>
</dbReference>
<dbReference type="Pfam" id="PF00176">
    <property type="entry name" value="SNF2-rel_dom"/>
    <property type="match status" value="1"/>
</dbReference>
<dbReference type="SMART" id="SM00592">
    <property type="entry name" value="BRK"/>
    <property type="match status" value="1"/>
</dbReference>
<dbReference type="SMART" id="SM00298">
    <property type="entry name" value="CHROMO"/>
    <property type="match status" value="2"/>
</dbReference>
<dbReference type="SMART" id="SM00487">
    <property type="entry name" value="DEXDc"/>
    <property type="match status" value="1"/>
</dbReference>
<dbReference type="SMART" id="SM00490">
    <property type="entry name" value="HELICc"/>
    <property type="match status" value="1"/>
</dbReference>
<dbReference type="SUPFAM" id="SSF160481">
    <property type="entry name" value="BRK domain-like"/>
    <property type="match status" value="1"/>
</dbReference>
<dbReference type="SUPFAM" id="SSF54160">
    <property type="entry name" value="Chromo domain-like"/>
    <property type="match status" value="2"/>
</dbReference>
<dbReference type="SUPFAM" id="SSF52540">
    <property type="entry name" value="P-loop containing nucleoside triphosphate hydrolases"/>
    <property type="match status" value="2"/>
</dbReference>
<dbReference type="PROSITE" id="PS50013">
    <property type="entry name" value="CHROMO_2"/>
    <property type="match status" value="2"/>
</dbReference>
<dbReference type="PROSITE" id="PS51192">
    <property type="entry name" value="HELICASE_ATP_BIND_1"/>
    <property type="match status" value="1"/>
</dbReference>
<dbReference type="PROSITE" id="PS51194">
    <property type="entry name" value="HELICASE_CTER"/>
    <property type="match status" value="1"/>
</dbReference>
<feature type="chain" id="PRO_0000367313" description="Chromodomain-helicase-DNA-binding protein 8">
    <location>
        <begin position="1"/>
        <end position="2184"/>
    </location>
</feature>
<feature type="domain" description="Chromo 1" evidence="1">
    <location>
        <begin position="586"/>
        <end position="653"/>
    </location>
</feature>
<feature type="domain" description="Chromo 2" evidence="1">
    <location>
        <begin position="668"/>
        <end position="734"/>
    </location>
</feature>
<feature type="domain" description="Helicase ATP-binding" evidence="1">
    <location>
        <begin position="767"/>
        <end position="941"/>
    </location>
</feature>
<feature type="domain" description="Helicase C-terminal" evidence="1">
    <location>
        <begin position="1081"/>
        <end position="1252"/>
    </location>
</feature>
<feature type="region of interest" description="Disordered" evidence="2">
    <location>
        <begin position="379"/>
        <end position="399"/>
    </location>
</feature>
<feature type="region of interest" description="Disordered" evidence="2">
    <location>
        <begin position="419"/>
        <end position="527"/>
    </location>
</feature>
<feature type="region of interest" description="Disordered" evidence="2">
    <location>
        <begin position="1907"/>
        <end position="1989"/>
    </location>
</feature>
<feature type="region of interest" description="Disordered" evidence="2">
    <location>
        <begin position="2039"/>
        <end position="2076"/>
    </location>
</feature>
<feature type="short sequence motif" description="DEAH box" evidence="1">
    <location>
        <begin position="892"/>
        <end position="895"/>
    </location>
</feature>
<feature type="compositionally biased region" description="Basic and acidic residues" evidence="2">
    <location>
        <begin position="387"/>
        <end position="399"/>
    </location>
</feature>
<feature type="compositionally biased region" description="Acidic residues" evidence="2">
    <location>
        <begin position="425"/>
        <end position="437"/>
    </location>
</feature>
<feature type="compositionally biased region" description="Basic and acidic residues" evidence="2">
    <location>
        <begin position="448"/>
        <end position="459"/>
    </location>
</feature>
<feature type="compositionally biased region" description="Basic residues" evidence="2">
    <location>
        <begin position="516"/>
        <end position="527"/>
    </location>
</feature>
<feature type="compositionally biased region" description="Low complexity" evidence="2">
    <location>
        <begin position="1912"/>
        <end position="1961"/>
    </location>
</feature>
<feature type="compositionally biased region" description="Low complexity" evidence="2">
    <location>
        <begin position="2040"/>
        <end position="2054"/>
    </location>
</feature>
<feature type="binding site" evidence="1">
    <location>
        <begin position="780"/>
        <end position="787"/>
    </location>
    <ligand>
        <name>ATP</name>
        <dbReference type="ChEBI" id="CHEBI:30616"/>
    </ligand>
</feature>
<protein>
    <recommendedName>
        <fullName evidence="1">Chromodomain-helicase-DNA-binding protein 8</fullName>
        <shortName evidence="1">CHD-8</shortName>
        <ecNumber evidence="1">3.6.4.-</ecNumber>
    </recommendedName>
    <alternativeName>
        <fullName evidence="1">ATP-dependent helicase CHD8</fullName>
    </alternativeName>
</protein>